<sequence length="840" mass="92178">MAAAVAMRSGSGSDGGGGGYDKAGMDSGKYVRYTPEQVEALERVYAECPKPSSSRRQQLLRDCPILANIEPKQIKVWFQNRRCRDKQRKEASRLQAVNRKLTAMNKLLMEENERLQKQVSQLVHENAYMKQQLQNPSLGNDTSCESNVTTPQNPLRDASNPSGLLTIAEETLTEFLSKATGTAVDWVPMPGMKPGPDSFGIVAVSHGCRGVAARACGLVNLEPTKIVEILKDRPSWFRDCRSLEVFTMFPAGNGGTIELVYMQMYAPTTLVPARDFWTLRYTTTMDDGSLVVCERSLSGSGGGPSTASAQQFVRAEMLPSGYLVRPCEGGGSIVHIVDHLDLEAWSVPEVLRPLYESSRVVAQKMTTAALRHIRQIAQETSGEVVYALGRQPAVLRTFSQRLSRGFNDAISGFNDDGWSVMGGDGIEDVIIACNAKKVRNTSTSANAFVTPGGVICAKASMLLQSVPPAVLVRFLREHRSEWADYNFDAYSASSLKTSSCSLPGLRPMRFSGSQIIMPLAHTVENEEILEVVRLEGQALTHDDGLMSRDIHLLQLCTGIDEKSMGSCFQLVFAPIDELFPDDAPLISSGFRVIPLDMKTDGTPAGRTLDLASSLEVGSTAQPTGDASMDDCNLRSVLTIAFQFPYEMHLQDSVATMARQYVRSIVSSVQRVSMAISPSRSGLNAGQKIISGFPEAPTLARWICQSYQFHLGVELLRQADDAGEALLKMLWDYEDAILCCSFKEKPVFTFANEMGLNMLETSLVALQDLSLDKIFDEAGRKALYNEIPKLMEQGYVYLPGGVCLSGMGRHVSFEQAVAWKVLGEDNNVHCLAFCFVNWSFV</sequence>
<proteinExistence type="evidence at transcript level"/>
<dbReference type="EMBL" id="CM000135">
    <property type="protein sequence ID" value="EAY78948.1"/>
    <property type="status" value="ALT_SEQ"/>
    <property type="molecule type" value="Genomic_DNA"/>
</dbReference>
<dbReference type="EMBL" id="EF555530">
    <property type="protein sequence ID" value="ABQ57271.1"/>
    <property type="molecule type" value="mRNA"/>
</dbReference>
<dbReference type="SMR" id="A2Z8L4"/>
<dbReference type="STRING" id="39946.A2Z8L4"/>
<dbReference type="EnsemblPlants" id="OsGoSa_10g0014710.01">
    <property type="protein sequence ID" value="OsGoSa_10g0014710.01"/>
    <property type="gene ID" value="OsGoSa_10g0014710"/>
</dbReference>
<dbReference type="EnsemblPlants" id="OsGoSa_10g0014710.02">
    <property type="protein sequence ID" value="OsGoSa_10g0014710.02"/>
    <property type="gene ID" value="OsGoSa_10g0014710"/>
</dbReference>
<dbReference type="EnsemblPlants" id="OsLaMu_10g0014950.01">
    <property type="protein sequence ID" value="OsLaMu_10g0014950.01"/>
    <property type="gene ID" value="OsLaMu_10g0014950"/>
</dbReference>
<dbReference type="EnsemblPlants" id="OsLaMu_10g0014950.02">
    <property type="protein sequence ID" value="OsLaMu_10g0014950.02"/>
    <property type="gene ID" value="OsLaMu_10g0014950"/>
</dbReference>
<dbReference type="EnsemblPlants" id="OsMH63_10G014500_01">
    <property type="protein sequence ID" value="OsMH63_10G014500_01"/>
    <property type="gene ID" value="OsMH63_10G014500"/>
</dbReference>
<dbReference type="Gramene" id="OsGoSa_10g0014710.01">
    <property type="protein sequence ID" value="OsGoSa_10g0014710.01"/>
    <property type="gene ID" value="OsGoSa_10g0014710"/>
</dbReference>
<dbReference type="Gramene" id="OsGoSa_10g0014710.02">
    <property type="protein sequence ID" value="OsGoSa_10g0014710.02"/>
    <property type="gene ID" value="OsGoSa_10g0014710"/>
</dbReference>
<dbReference type="Gramene" id="OsLaMu_10g0014950.01">
    <property type="protein sequence ID" value="OsLaMu_10g0014950.01"/>
    <property type="gene ID" value="OsLaMu_10g0014950"/>
</dbReference>
<dbReference type="Gramene" id="OsLaMu_10g0014950.02">
    <property type="protein sequence ID" value="OsLaMu_10g0014950.02"/>
    <property type="gene ID" value="OsLaMu_10g0014950"/>
</dbReference>
<dbReference type="Gramene" id="OsMH63_10G014500_01">
    <property type="protein sequence ID" value="OsMH63_10G014500_01"/>
    <property type="gene ID" value="OsMH63_10G014500"/>
</dbReference>
<dbReference type="OrthoDB" id="125004at2759"/>
<dbReference type="Proteomes" id="UP000007015">
    <property type="component" value="Chromosome 10"/>
</dbReference>
<dbReference type="GO" id="GO:0005634">
    <property type="term" value="C:nucleus"/>
    <property type="evidence" value="ECO:0007669"/>
    <property type="project" value="UniProtKB-SubCell"/>
</dbReference>
<dbReference type="GO" id="GO:0003677">
    <property type="term" value="F:DNA binding"/>
    <property type="evidence" value="ECO:0007669"/>
    <property type="project" value="UniProtKB-KW"/>
</dbReference>
<dbReference type="GO" id="GO:0003700">
    <property type="term" value="F:DNA-binding transcription factor activity"/>
    <property type="evidence" value="ECO:0007669"/>
    <property type="project" value="InterPro"/>
</dbReference>
<dbReference type="GO" id="GO:0008289">
    <property type="term" value="F:lipid binding"/>
    <property type="evidence" value="ECO:0007669"/>
    <property type="project" value="InterPro"/>
</dbReference>
<dbReference type="CDD" id="cd14686">
    <property type="entry name" value="bZIP"/>
    <property type="match status" value="1"/>
</dbReference>
<dbReference type="CDD" id="cd00086">
    <property type="entry name" value="homeodomain"/>
    <property type="match status" value="1"/>
</dbReference>
<dbReference type="CDD" id="cd08875">
    <property type="entry name" value="START_ArGLABRA2_like"/>
    <property type="match status" value="1"/>
</dbReference>
<dbReference type="FunFam" id="1.10.10.60:FF:000197">
    <property type="entry name" value="Homeobox-leucine zipper protein REVOLUTA"/>
    <property type="match status" value="1"/>
</dbReference>
<dbReference type="Gene3D" id="3.30.530.20">
    <property type="match status" value="1"/>
</dbReference>
<dbReference type="Gene3D" id="1.10.10.60">
    <property type="entry name" value="Homeodomain-like"/>
    <property type="match status" value="1"/>
</dbReference>
<dbReference type="InterPro" id="IPR001356">
    <property type="entry name" value="HD"/>
</dbReference>
<dbReference type="InterPro" id="IPR044830">
    <property type="entry name" value="HD-Zip_III"/>
</dbReference>
<dbReference type="InterPro" id="IPR009057">
    <property type="entry name" value="Homeodomain-like_sf"/>
</dbReference>
<dbReference type="InterPro" id="IPR013978">
    <property type="entry name" value="MEKHLA"/>
</dbReference>
<dbReference type="InterPro" id="IPR023393">
    <property type="entry name" value="START-like_dom_sf"/>
</dbReference>
<dbReference type="InterPro" id="IPR002913">
    <property type="entry name" value="START_lipid-bd_dom"/>
</dbReference>
<dbReference type="PANTHER" id="PTHR45950">
    <property type="entry name" value="HOMEOBOX-LEUCINE ZIPPER PROTEIN ATHB-14"/>
    <property type="match status" value="1"/>
</dbReference>
<dbReference type="PANTHER" id="PTHR45950:SF10">
    <property type="entry name" value="HOMEOBOX-LEUCINE ZIPPER PROTEIN REVOLUTA"/>
    <property type="match status" value="1"/>
</dbReference>
<dbReference type="Pfam" id="PF00046">
    <property type="entry name" value="Homeodomain"/>
    <property type="match status" value="1"/>
</dbReference>
<dbReference type="Pfam" id="PF08670">
    <property type="entry name" value="MEKHLA"/>
    <property type="match status" value="1"/>
</dbReference>
<dbReference type="Pfam" id="PF01852">
    <property type="entry name" value="START"/>
    <property type="match status" value="1"/>
</dbReference>
<dbReference type="SMART" id="SM00389">
    <property type="entry name" value="HOX"/>
    <property type="match status" value="1"/>
</dbReference>
<dbReference type="SMART" id="SM00234">
    <property type="entry name" value="START"/>
    <property type="match status" value="1"/>
</dbReference>
<dbReference type="SUPFAM" id="SSF55961">
    <property type="entry name" value="Bet v1-like"/>
    <property type="match status" value="1"/>
</dbReference>
<dbReference type="SUPFAM" id="SSF46689">
    <property type="entry name" value="Homeodomain-like"/>
    <property type="match status" value="1"/>
</dbReference>
<dbReference type="PROSITE" id="PS50071">
    <property type="entry name" value="HOMEOBOX_2"/>
    <property type="match status" value="1"/>
</dbReference>
<dbReference type="PROSITE" id="PS50848">
    <property type="entry name" value="START"/>
    <property type="match status" value="1"/>
</dbReference>
<reference key="1">
    <citation type="journal article" date="2005" name="PLoS Biol.">
        <title>The genomes of Oryza sativa: a history of duplications.</title>
        <authorList>
            <person name="Yu J."/>
            <person name="Wang J."/>
            <person name="Lin W."/>
            <person name="Li S."/>
            <person name="Li H."/>
            <person name="Zhou J."/>
            <person name="Ni P."/>
            <person name="Dong W."/>
            <person name="Hu S."/>
            <person name="Zeng C."/>
            <person name="Zhang J."/>
            <person name="Zhang Y."/>
            <person name="Li R."/>
            <person name="Xu Z."/>
            <person name="Li S."/>
            <person name="Li X."/>
            <person name="Zheng H."/>
            <person name="Cong L."/>
            <person name="Lin L."/>
            <person name="Yin J."/>
            <person name="Geng J."/>
            <person name="Li G."/>
            <person name="Shi J."/>
            <person name="Liu J."/>
            <person name="Lv H."/>
            <person name="Li J."/>
            <person name="Wang J."/>
            <person name="Deng Y."/>
            <person name="Ran L."/>
            <person name="Shi X."/>
            <person name="Wang X."/>
            <person name="Wu Q."/>
            <person name="Li C."/>
            <person name="Ren X."/>
            <person name="Wang J."/>
            <person name="Wang X."/>
            <person name="Li D."/>
            <person name="Liu D."/>
            <person name="Zhang X."/>
            <person name="Ji Z."/>
            <person name="Zhao W."/>
            <person name="Sun Y."/>
            <person name="Zhang Z."/>
            <person name="Bao J."/>
            <person name="Han Y."/>
            <person name="Dong L."/>
            <person name="Ji J."/>
            <person name="Chen P."/>
            <person name="Wu S."/>
            <person name="Liu J."/>
            <person name="Xiao Y."/>
            <person name="Bu D."/>
            <person name="Tan J."/>
            <person name="Yang L."/>
            <person name="Ye C."/>
            <person name="Zhang J."/>
            <person name="Xu J."/>
            <person name="Zhou Y."/>
            <person name="Yu Y."/>
            <person name="Zhang B."/>
            <person name="Zhuang S."/>
            <person name="Wei H."/>
            <person name="Liu B."/>
            <person name="Lei M."/>
            <person name="Yu H."/>
            <person name="Li Y."/>
            <person name="Xu H."/>
            <person name="Wei S."/>
            <person name="He X."/>
            <person name="Fang L."/>
            <person name="Zhang Z."/>
            <person name="Zhang Y."/>
            <person name="Huang X."/>
            <person name="Su Z."/>
            <person name="Tong W."/>
            <person name="Li J."/>
            <person name="Tong Z."/>
            <person name="Li S."/>
            <person name="Ye J."/>
            <person name="Wang L."/>
            <person name="Fang L."/>
            <person name="Lei T."/>
            <person name="Chen C.-S."/>
            <person name="Chen H.-C."/>
            <person name="Xu Z."/>
            <person name="Li H."/>
            <person name="Huang H."/>
            <person name="Zhang F."/>
            <person name="Xu H."/>
            <person name="Li N."/>
            <person name="Zhao C."/>
            <person name="Li S."/>
            <person name="Dong L."/>
            <person name="Huang Y."/>
            <person name="Li L."/>
            <person name="Xi Y."/>
            <person name="Qi Q."/>
            <person name="Li W."/>
            <person name="Zhang B."/>
            <person name="Hu W."/>
            <person name="Zhang Y."/>
            <person name="Tian X."/>
            <person name="Jiao Y."/>
            <person name="Liang X."/>
            <person name="Jin J."/>
            <person name="Gao L."/>
            <person name="Zheng W."/>
            <person name="Hao B."/>
            <person name="Liu S.-M."/>
            <person name="Wang W."/>
            <person name="Yuan L."/>
            <person name="Cao M."/>
            <person name="McDermott J."/>
            <person name="Samudrala R."/>
            <person name="Wang J."/>
            <person name="Wong G.K.-S."/>
            <person name="Yang H."/>
        </authorList>
    </citation>
    <scope>NUCLEOTIDE SEQUENCE [LARGE SCALE GENOMIC DNA]</scope>
    <source>
        <strain>cv. 93-11</strain>
    </source>
</reference>
<reference key="2">
    <citation type="journal article" date="2008" name="Plant Mol. Biol.">
        <title>A genome-wide survey of HD-Zip genes in rice and analysis of drought-responsive family members.</title>
        <authorList>
            <person name="Agalou A."/>
            <person name="Purwantomo S."/>
            <person name="Oevernaes E."/>
            <person name="Johannesson H."/>
            <person name="Zhu X."/>
            <person name="Estiati A."/>
            <person name="de Kam R.J."/>
            <person name="Engstroem P."/>
            <person name="Slamet-Loedin I.H."/>
            <person name="Zhu Z."/>
            <person name="Wang M."/>
            <person name="Xiong L."/>
            <person name="Meijer A.H."/>
            <person name="Ouwerkerk P.B.F."/>
        </authorList>
    </citation>
    <scope>NUCLEOTIDE SEQUENCE [MRNA] OF 775-840</scope>
    <scope>TISSUE SPECIFICITY</scope>
    <scope>GENE FAMILY</scope>
    <scope>NOMENCLATURE</scope>
    <source>
        <strain>cv. Minghui 86</strain>
    </source>
</reference>
<feature type="chain" id="PRO_0000331690" description="Homeobox-leucine zipper protein HOX9">
    <location>
        <begin position="1"/>
        <end position="840"/>
    </location>
</feature>
<feature type="domain" description="START" evidence="4">
    <location>
        <begin position="157"/>
        <end position="385"/>
    </location>
</feature>
<feature type="DNA-binding region" description="Homeobox" evidence="3">
    <location>
        <begin position="26"/>
        <end position="89"/>
    </location>
</feature>
<feature type="region of interest" description="Disordered" evidence="5">
    <location>
        <begin position="1"/>
        <end position="26"/>
    </location>
</feature>
<feature type="region of interest" description="Disordered" evidence="5">
    <location>
        <begin position="135"/>
        <end position="160"/>
    </location>
</feature>
<feature type="coiled-coil region" evidence="2">
    <location>
        <begin position="86"/>
        <end position="135"/>
    </location>
</feature>
<feature type="compositionally biased region" description="Gly residues" evidence="5">
    <location>
        <begin position="12"/>
        <end position="21"/>
    </location>
</feature>
<accession>A2Z8L4</accession>
<accession>A5JPU5</accession>
<protein>
    <recommendedName>
        <fullName>Homeobox-leucine zipper protein HOX9</fullName>
    </recommendedName>
    <alternativeName>
        <fullName>HD-ZIP protein HOX9</fullName>
    </alternativeName>
    <alternativeName>
        <fullName>Homeodomain transcription factor HOX9</fullName>
    </alternativeName>
    <alternativeName>
        <fullName>OsHB2</fullName>
    </alternativeName>
    <alternativeName>
        <fullName>OsHox9</fullName>
    </alternativeName>
</protein>
<name>HOX9_ORYSI</name>
<keyword id="KW-0175">Coiled coil</keyword>
<keyword id="KW-0238">DNA-binding</keyword>
<keyword id="KW-0371">Homeobox</keyword>
<keyword id="KW-0539">Nucleus</keyword>
<keyword id="KW-1185">Reference proteome</keyword>
<keyword id="KW-0804">Transcription</keyword>
<keyword id="KW-0805">Transcription regulation</keyword>
<gene>
    <name type="primary">HOX9</name>
    <name type="synonym">HB2</name>
    <name type="ORF">OsI_032907</name>
</gene>
<organism>
    <name type="scientific">Oryza sativa subsp. indica</name>
    <name type="common">Rice</name>
    <dbReference type="NCBI Taxonomy" id="39946"/>
    <lineage>
        <taxon>Eukaryota</taxon>
        <taxon>Viridiplantae</taxon>
        <taxon>Streptophyta</taxon>
        <taxon>Embryophyta</taxon>
        <taxon>Tracheophyta</taxon>
        <taxon>Spermatophyta</taxon>
        <taxon>Magnoliopsida</taxon>
        <taxon>Liliopsida</taxon>
        <taxon>Poales</taxon>
        <taxon>Poaceae</taxon>
        <taxon>BOP clade</taxon>
        <taxon>Oryzoideae</taxon>
        <taxon>Oryzeae</taxon>
        <taxon>Oryzinae</taxon>
        <taxon>Oryza</taxon>
        <taxon>Oryza sativa</taxon>
    </lineage>
</organism>
<evidence type="ECO:0000250" key="1"/>
<evidence type="ECO:0000255" key="2"/>
<evidence type="ECO:0000255" key="3">
    <source>
        <dbReference type="PROSITE-ProRule" id="PRU00108"/>
    </source>
</evidence>
<evidence type="ECO:0000255" key="4">
    <source>
        <dbReference type="PROSITE-ProRule" id="PRU00197"/>
    </source>
</evidence>
<evidence type="ECO:0000256" key="5">
    <source>
        <dbReference type="SAM" id="MobiDB-lite"/>
    </source>
</evidence>
<evidence type="ECO:0000269" key="6">
    <source>
    </source>
</evidence>
<evidence type="ECO:0000305" key="7"/>
<comment type="function">
    <text evidence="1">Probable transcription factor.</text>
</comment>
<comment type="subcellular location">
    <subcellularLocation>
        <location evidence="7">Nucleus</location>
    </subcellularLocation>
</comment>
<comment type="tissue specificity">
    <text evidence="6">Expressed in seedlings, roots, stems, leaf sheaths and blades and panicles.</text>
</comment>
<comment type="similarity">
    <text evidence="7">Belongs to the HD-ZIP homeobox family. Class III subfamily.</text>
</comment>
<comment type="sequence caution" evidence="7">
    <conflict type="erroneous gene model prediction">
        <sequence resource="EMBL-CDS" id="EAY78948"/>
    </conflict>
</comment>
<comment type="sequence caution" evidence="7">
    <conflict type="erroneous initiation">
        <sequence resource="EMBL-CDS" id="EAY78948"/>
    </conflict>
    <text>Truncated N-terminus.</text>
</comment>